<evidence type="ECO:0000269" key="1">
    <source>
    </source>
</evidence>
<evidence type="ECO:0000269" key="2">
    <source>
    </source>
</evidence>
<evidence type="ECO:0000269" key="3">
    <source>
    </source>
</evidence>
<evidence type="ECO:0000305" key="4"/>
<sequence>MTEELKLMGANRRDQLLLWLKESKSPLTGGELAKKANVSRQVIVQDISLLKAKNVPIIATSQGYVYMDAAAQQHQQAERIIACLHGPERTEEELQLIVDEGVTVKDVKIEHPVYGDLTAAIQVGTRKEVSHFIKKINSTNAAYLSQLTDGVHLHTLTAPDEHRIDQACQALEEAGILIKD</sequence>
<feature type="chain" id="PRO_0000049883" description="Transcription repressor NadR">
    <location>
        <begin position="1"/>
        <end position="180"/>
    </location>
</feature>
<feature type="sequence conflict" description="In Ref. 1; M98822." evidence="4" ref="1">
    <original>LIKD</original>
    <variation>FN</variation>
    <location>
        <begin position="177"/>
        <end position="180"/>
    </location>
</feature>
<name>NADR_BACSU</name>
<keyword id="KW-0238">DNA-binding</keyword>
<keyword id="KW-1185">Reference proteome</keyword>
<keyword id="KW-0678">Repressor</keyword>
<keyword id="KW-0804">Transcription</keyword>
<keyword id="KW-0805">Transcription regulation</keyword>
<accession>P39667</accession>
<proteinExistence type="evidence at protein level"/>
<gene>
    <name type="primary">nadR</name>
    <name type="synonym">niaR</name>
    <name type="synonym">yrxA</name>
    <name type="ordered locus">BSU27890</name>
</gene>
<organism>
    <name type="scientific">Bacillus subtilis (strain 168)</name>
    <dbReference type="NCBI Taxonomy" id="224308"/>
    <lineage>
        <taxon>Bacteria</taxon>
        <taxon>Bacillati</taxon>
        <taxon>Bacillota</taxon>
        <taxon>Bacilli</taxon>
        <taxon>Bacillales</taxon>
        <taxon>Bacillaceae</taxon>
        <taxon>Bacillus</taxon>
    </lineage>
</organism>
<reference key="1">
    <citation type="journal article" date="1993" name="J. Bacteriol.">
        <title>Cloning, nucleotide sequence, and regulation of the Bacillus subtilis nadB gene and a nifS-like gene, both of which are essential for NAD biosynthesis.</title>
        <authorList>
            <person name="Sun D."/>
            <person name="Setlow P.L."/>
        </authorList>
    </citation>
    <scope>NUCLEOTIDE SEQUENCE [GENOMIC DNA]</scope>
    <scope>DISRUPTION PHENOTYPE</scope>
    <source>
        <strain>168</strain>
    </source>
</reference>
<reference key="2">
    <citation type="journal article" date="1997" name="Nature">
        <title>The complete genome sequence of the Gram-positive bacterium Bacillus subtilis.</title>
        <authorList>
            <person name="Kunst F."/>
            <person name="Ogasawara N."/>
            <person name="Moszer I."/>
            <person name="Albertini A.M."/>
            <person name="Alloni G."/>
            <person name="Azevedo V."/>
            <person name="Bertero M.G."/>
            <person name="Bessieres P."/>
            <person name="Bolotin A."/>
            <person name="Borchert S."/>
            <person name="Borriss R."/>
            <person name="Boursier L."/>
            <person name="Brans A."/>
            <person name="Braun M."/>
            <person name="Brignell S.C."/>
            <person name="Bron S."/>
            <person name="Brouillet S."/>
            <person name="Bruschi C.V."/>
            <person name="Caldwell B."/>
            <person name="Capuano V."/>
            <person name="Carter N.M."/>
            <person name="Choi S.-K."/>
            <person name="Codani J.-J."/>
            <person name="Connerton I.F."/>
            <person name="Cummings N.J."/>
            <person name="Daniel R.A."/>
            <person name="Denizot F."/>
            <person name="Devine K.M."/>
            <person name="Duesterhoeft A."/>
            <person name="Ehrlich S.D."/>
            <person name="Emmerson P.T."/>
            <person name="Entian K.-D."/>
            <person name="Errington J."/>
            <person name="Fabret C."/>
            <person name="Ferrari E."/>
            <person name="Foulger D."/>
            <person name="Fritz C."/>
            <person name="Fujita M."/>
            <person name="Fujita Y."/>
            <person name="Fuma S."/>
            <person name="Galizzi A."/>
            <person name="Galleron N."/>
            <person name="Ghim S.-Y."/>
            <person name="Glaser P."/>
            <person name="Goffeau A."/>
            <person name="Golightly E.J."/>
            <person name="Grandi G."/>
            <person name="Guiseppi G."/>
            <person name="Guy B.J."/>
            <person name="Haga K."/>
            <person name="Haiech J."/>
            <person name="Harwood C.R."/>
            <person name="Henaut A."/>
            <person name="Hilbert H."/>
            <person name="Holsappel S."/>
            <person name="Hosono S."/>
            <person name="Hullo M.-F."/>
            <person name="Itaya M."/>
            <person name="Jones L.-M."/>
            <person name="Joris B."/>
            <person name="Karamata D."/>
            <person name="Kasahara Y."/>
            <person name="Klaerr-Blanchard M."/>
            <person name="Klein C."/>
            <person name="Kobayashi Y."/>
            <person name="Koetter P."/>
            <person name="Koningstein G."/>
            <person name="Krogh S."/>
            <person name="Kumano M."/>
            <person name="Kurita K."/>
            <person name="Lapidus A."/>
            <person name="Lardinois S."/>
            <person name="Lauber J."/>
            <person name="Lazarevic V."/>
            <person name="Lee S.-M."/>
            <person name="Levine A."/>
            <person name="Liu H."/>
            <person name="Masuda S."/>
            <person name="Mauel C."/>
            <person name="Medigue C."/>
            <person name="Medina N."/>
            <person name="Mellado R.P."/>
            <person name="Mizuno M."/>
            <person name="Moestl D."/>
            <person name="Nakai S."/>
            <person name="Noback M."/>
            <person name="Noone D."/>
            <person name="O'Reilly M."/>
            <person name="Ogawa K."/>
            <person name="Ogiwara A."/>
            <person name="Oudega B."/>
            <person name="Park S.-H."/>
            <person name="Parro V."/>
            <person name="Pohl T.M."/>
            <person name="Portetelle D."/>
            <person name="Porwollik S."/>
            <person name="Prescott A.M."/>
            <person name="Presecan E."/>
            <person name="Pujic P."/>
            <person name="Purnelle B."/>
            <person name="Rapoport G."/>
            <person name="Rey M."/>
            <person name="Reynolds S."/>
            <person name="Rieger M."/>
            <person name="Rivolta C."/>
            <person name="Rocha E."/>
            <person name="Roche B."/>
            <person name="Rose M."/>
            <person name="Sadaie Y."/>
            <person name="Sato T."/>
            <person name="Scanlan E."/>
            <person name="Schleich S."/>
            <person name="Schroeter R."/>
            <person name="Scoffone F."/>
            <person name="Sekiguchi J."/>
            <person name="Sekowska A."/>
            <person name="Seror S.J."/>
            <person name="Serror P."/>
            <person name="Shin B.-S."/>
            <person name="Soldo B."/>
            <person name="Sorokin A."/>
            <person name="Tacconi E."/>
            <person name="Takagi T."/>
            <person name="Takahashi H."/>
            <person name="Takemaru K."/>
            <person name="Takeuchi M."/>
            <person name="Tamakoshi A."/>
            <person name="Tanaka T."/>
            <person name="Terpstra P."/>
            <person name="Tognoni A."/>
            <person name="Tosato V."/>
            <person name="Uchiyama S."/>
            <person name="Vandenbol M."/>
            <person name="Vannier F."/>
            <person name="Vassarotti A."/>
            <person name="Viari A."/>
            <person name="Wambutt R."/>
            <person name="Wedler E."/>
            <person name="Wedler H."/>
            <person name="Weitzenegger T."/>
            <person name="Winters P."/>
            <person name="Wipat A."/>
            <person name="Yamamoto H."/>
            <person name="Yamane K."/>
            <person name="Yasumoto K."/>
            <person name="Yata K."/>
            <person name="Yoshida K."/>
            <person name="Yoshikawa H.-F."/>
            <person name="Zumstein E."/>
            <person name="Yoshikawa H."/>
            <person name="Danchin A."/>
        </authorList>
    </citation>
    <scope>NUCLEOTIDE SEQUENCE [LARGE SCALE GENOMIC DNA]</scope>
    <source>
        <strain>168</strain>
    </source>
</reference>
<reference key="3">
    <citation type="journal article" date="2009" name="Microbiology">
        <title>From a consortium sequence to a unified sequence: the Bacillus subtilis 168 reference genome a decade later.</title>
        <authorList>
            <person name="Barbe V."/>
            <person name="Cruveiller S."/>
            <person name="Kunst F."/>
            <person name="Lenoble P."/>
            <person name="Meurice G."/>
            <person name="Sekowska A."/>
            <person name="Vallenet D."/>
            <person name="Wang T."/>
            <person name="Moszer I."/>
            <person name="Medigue C."/>
            <person name="Danchin A."/>
        </authorList>
    </citation>
    <scope>SEQUENCE REVISION TO C-TERMINUS</scope>
</reference>
<reference key="4">
    <citation type="journal article" date="2005" name="J. Bacteriol.">
        <title>YrxA is the transcriptional regulator that represses de novo NAD biosynthesis in Bacillus subtilis.</title>
        <authorList>
            <person name="Rossolillo P."/>
            <person name="Marinoni I."/>
            <person name="Galli E."/>
            <person name="Colosimo A."/>
            <person name="Albertini A.M."/>
        </authorList>
    </citation>
    <scope>FUNCTION AS A TRANSCRIPTION REPRESSOR</scope>
    <scope>DNA-BINDING</scope>
    <scope>POSSIBLE NICOTINIC ACID-BINDING</scope>
    <scope>DISRUPTION PHENOTYPE</scope>
    <source>
        <strain>168</strain>
    </source>
</reference>
<reference key="5">
    <citation type="journal article" date="2008" name="Nucleic Acids Res.">
        <title>Transcriptional regulation of NAD metabolism in bacteria: genomic reconstruction of NiaR (YrxA) regulon.</title>
        <authorList>
            <person name="Rodionov D.A."/>
            <person name="Li X."/>
            <person name="Rodionova I.A."/>
            <person name="Yang C."/>
            <person name="Sorci L."/>
            <person name="Dervyn E."/>
            <person name="Martynowski D."/>
            <person name="Zhang H."/>
            <person name="Gelfand M.S."/>
            <person name="Osterman A.L."/>
        </authorList>
    </citation>
    <scope>DNA-BINDING</scope>
    <scope>SUBUNIT</scope>
    <scope>DISRUPTION PHENOTYPE</scope>
</reference>
<comment type="function">
    <text evidence="1">In the presence of nicotinic acid represses transcription of the nadBCA and nifS-nadR operons. Also binds to DNA upstream of the niaP gene, probably regulating it as well. May bind nicotinic acid.</text>
</comment>
<comment type="subunit">
    <text evidence="2">Homodimer.</text>
</comment>
<comment type="disruption phenotype">
    <text evidence="1 2 3">No visible phenotype when grown in the absence of nicotinic acid.</text>
</comment>
<comment type="caution">
    <text evidence="4">It is uncertain whether Met-1 or Met-8 is the initiator.</text>
</comment>
<dbReference type="EMBL" id="M98822">
    <property type="status" value="NOT_ANNOTATED_CDS"/>
    <property type="molecule type" value="Genomic_DNA"/>
</dbReference>
<dbReference type="EMBL" id="AL009126">
    <property type="protein sequence ID" value="CAB14749.2"/>
    <property type="molecule type" value="Genomic_DNA"/>
</dbReference>
<dbReference type="PIR" id="A47071">
    <property type="entry name" value="A47071"/>
</dbReference>
<dbReference type="RefSeq" id="NP_390667.2">
    <property type="nucleotide sequence ID" value="NC_000964.3"/>
</dbReference>
<dbReference type="RefSeq" id="WP_004398582.1">
    <property type="nucleotide sequence ID" value="NZ_OZ025638.1"/>
</dbReference>
<dbReference type="SMR" id="P39667"/>
<dbReference type="FunCoup" id="P39667">
    <property type="interactions" value="10"/>
</dbReference>
<dbReference type="STRING" id="224308.BSU27890"/>
<dbReference type="PaxDb" id="224308-BSU27890"/>
<dbReference type="EnsemblBacteria" id="CAB14749">
    <property type="protein sequence ID" value="CAB14749"/>
    <property type="gene ID" value="BSU_27890"/>
</dbReference>
<dbReference type="GeneID" id="937515"/>
<dbReference type="KEGG" id="bsu:BSU27890"/>
<dbReference type="PATRIC" id="fig|224308.179.peg.3030"/>
<dbReference type="eggNOG" id="COG1827">
    <property type="taxonomic scope" value="Bacteria"/>
</dbReference>
<dbReference type="InParanoid" id="P39667"/>
<dbReference type="OrthoDB" id="9792661at2"/>
<dbReference type="PhylomeDB" id="P39667"/>
<dbReference type="BioCyc" id="BSUB:BSU27890-MONOMER"/>
<dbReference type="Proteomes" id="UP000001570">
    <property type="component" value="Chromosome"/>
</dbReference>
<dbReference type="GO" id="GO:0003677">
    <property type="term" value="F:DNA binding"/>
    <property type="evidence" value="ECO:0007669"/>
    <property type="project" value="UniProtKB-KW"/>
</dbReference>
<dbReference type="GO" id="GO:0036094">
    <property type="term" value="F:small molecule binding"/>
    <property type="evidence" value="ECO:0007669"/>
    <property type="project" value="InterPro"/>
</dbReference>
<dbReference type="Gene3D" id="3.30.1340.20">
    <property type="entry name" value="3H domain"/>
    <property type="match status" value="1"/>
</dbReference>
<dbReference type="Gene3D" id="1.10.10.10">
    <property type="entry name" value="Winged helix-like DNA-binding domain superfamily/Winged helix DNA-binding domain"/>
    <property type="match status" value="1"/>
</dbReference>
<dbReference type="InterPro" id="IPR035922">
    <property type="entry name" value="3H_dom_sf"/>
</dbReference>
<dbReference type="InterPro" id="IPR004173">
    <property type="entry name" value="3H_domain"/>
</dbReference>
<dbReference type="InterPro" id="IPR013196">
    <property type="entry name" value="HTH_11"/>
</dbReference>
<dbReference type="InterPro" id="IPR026043">
    <property type="entry name" value="NadR"/>
</dbReference>
<dbReference type="InterPro" id="IPR036388">
    <property type="entry name" value="WH-like_DNA-bd_sf"/>
</dbReference>
<dbReference type="InterPro" id="IPR036390">
    <property type="entry name" value="WH_DNA-bd_sf"/>
</dbReference>
<dbReference type="PANTHER" id="PTHR40068">
    <property type="entry name" value="TRANSCRIPTION REPRESSOR NIAR-RELATED"/>
    <property type="match status" value="1"/>
</dbReference>
<dbReference type="PANTHER" id="PTHR40068:SF1">
    <property type="entry name" value="TRANSCRIPTION REPRESSOR NIAR-RELATED"/>
    <property type="match status" value="1"/>
</dbReference>
<dbReference type="Pfam" id="PF02829">
    <property type="entry name" value="3H"/>
    <property type="match status" value="1"/>
</dbReference>
<dbReference type="Pfam" id="PF08279">
    <property type="entry name" value="HTH_11"/>
    <property type="match status" value="1"/>
</dbReference>
<dbReference type="PIRSF" id="PIRSF037847">
    <property type="entry name" value="NiaR"/>
    <property type="match status" value="1"/>
</dbReference>
<dbReference type="SUPFAM" id="SSF75500">
    <property type="entry name" value="Putative transcriptional regulator TM1602, C-terminal domain"/>
    <property type="match status" value="1"/>
</dbReference>
<dbReference type="SUPFAM" id="SSF46785">
    <property type="entry name" value="Winged helix' DNA-binding domain"/>
    <property type="match status" value="1"/>
</dbReference>
<protein>
    <recommendedName>
        <fullName>Transcription repressor NadR</fullName>
    </recommendedName>
    <alternativeName>
        <fullName>ORF1</fullName>
    </alternativeName>
</protein>